<protein>
    <recommendedName>
        <fullName evidence="4">Glucose facilitated diffusion protein</fullName>
    </recommendedName>
</protein>
<sequence>MSSESSQGLVTRLALIAAIGGLLFGYDSAVIAAIGTPVDIHFIAPRHLSATAAASLSGMVVVAVLVGCVTGSLLSGWIGIRFGRRGGLLMSSICFVAAGFGAALTEKLFGTGGSALQIFCFFRFLAGLGIGVVSTLTPTYIAEIAPPDKRGQMVSGQQMAIVTGALTGYIFTWLLAHFGSIDWVNASGWCWSPASEGLIGIAFLLLLLTAPDTPHWLVMKGRHSEASKILARLEPQADPNLTIQKIKAGFDKAMDKSSAGLFAFGITVVFAGVSVAAFQQLVGINAVLYYAPQMFQNLGFGADTALLQTISIGVVNFIFTMIASRVVDRFGRKPLLIWGALGMAAMMAVLGCCFWFKVGGVLPLASVLLYIAVFGMSWGPVCWVVLSEMFPSSIKGAAMPIAVTGQWLANILVNFLFKVADGSPALNQTFNHGFSYLVFAALSILGGLIVARFVPETKGRSLDEIEEMWRSQK</sequence>
<name>GLF_ZYMMO</name>
<accession>P21906</accession>
<accession>Q5NQL4</accession>
<gene>
    <name evidence="4" type="primary">glf</name>
    <name type="ordered locus">ZMO0366</name>
</gene>
<comment type="function">
    <text evidence="2 3">Allows uptake of glucose by the cell; allows growth on glucose minimal medium by E.coli cells impaired in glucose transport (PubMed:8144485). Also transports fructose, but has a strong preference for glucose (PubMed:7768841).</text>
</comment>
<comment type="biophysicochemical properties">
    <kinetics>
        <KM evidence="2">4.1 mM for glucose uptake in E.coli at 10 degrees Celsius</KM>
        <KM evidence="2">39 mM for fructose uptake in E.coli at 15 degrees Celsius</KM>
        <Vmax evidence="2">42.0 nmol/min/mg enzyme for glucose uptake in E.coli at 10 degrees Celsius</Vmax>
        <Vmax evidence="2">93.0 nmol/min/mg enzyme for fructose uptake in E.coli at 15 degrees Celsius</Vmax>
    </kinetics>
</comment>
<comment type="subcellular location">
    <subcellularLocation>
        <location evidence="5">Cell inner membrane</location>
        <topology evidence="1">Multi-pass membrane protein</topology>
    </subcellularLocation>
</comment>
<comment type="similarity">
    <text evidence="5">Belongs to the major facilitator superfamily. Sugar transporter (TC 2.A.1.1) family.</text>
</comment>
<evidence type="ECO:0000255" key="1"/>
<evidence type="ECO:0000269" key="2">
    <source>
    </source>
</evidence>
<evidence type="ECO:0000269" key="3">
    <source>
    </source>
</evidence>
<evidence type="ECO:0000303" key="4">
    <source>
    </source>
</evidence>
<evidence type="ECO:0000305" key="5"/>
<proteinExistence type="evidence at protein level"/>
<organism>
    <name type="scientific">Zymomonas mobilis subsp. mobilis (strain ATCC 31821 / ZM4 / CP4)</name>
    <dbReference type="NCBI Taxonomy" id="264203"/>
    <lineage>
        <taxon>Bacteria</taxon>
        <taxon>Pseudomonadati</taxon>
        <taxon>Pseudomonadota</taxon>
        <taxon>Alphaproteobacteria</taxon>
        <taxon>Sphingomonadales</taxon>
        <taxon>Zymomonadaceae</taxon>
        <taxon>Zymomonas</taxon>
    </lineage>
</organism>
<keyword id="KW-0997">Cell inner membrane</keyword>
<keyword id="KW-1003">Cell membrane</keyword>
<keyword id="KW-0472">Membrane</keyword>
<keyword id="KW-1185">Reference proteome</keyword>
<keyword id="KW-0762">Sugar transport</keyword>
<keyword id="KW-0812">Transmembrane</keyword>
<keyword id="KW-1133">Transmembrane helix</keyword>
<keyword id="KW-0813">Transport</keyword>
<dbReference type="EMBL" id="M60615">
    <property type="protein sequence ID" value="AAA27691.1"/>
    <property type="molecule type" value="Genomic_DNA"/>
</dbReference>
<dbReference type="EMBL" id="AF313764">
    <property type="protein sequence ID" value="AAG29864.1"/>
    <property type="molecule type" value="Genomic_DNA"/>
</dbReference>
<dbReference type="EMBL" id="AE008692">
    <property type="protein sequence ID" value="AAV88990.1"/>
    <property type="molecule type" value="Genomic_DNA"/>
</dbReference>
<dbReference type="PIR" id="A37855">
    <property type="entry name" value="A37855"/>
</dbReference>
<dbReference type="RefSeq" id="WP_011240287.1">
    <property type="nucleotide sequence ID" value="NZ_CP035711.1"/>
</dbReference>
<dbReference type="SMR" id="P21906"/>
<dbReference type="STRING" id="264203.ZMO0366"/>
<dbReference type="TCDB" id="2.A.1.1.4">
    <property type="family name" value="the major facilitator superfamily (mfs)"/>
</dbReference>
<dbReference type="KEGG" id="zmo:ZMO0366"/>
<dbReference type="eggNOG" id="COG0477">
    <property type="taxonomic scope" value="Bacteria"/>
</dbReference>
<dbReference type="HOGENOM" id="CLU_001265_30_5_5"/>
<dbReference type="Proteomes" id="UP000001173">
    <property type="component" value="Chromosome"/>
</dbReference>
<dbReference type="GO" id="GO:0005886">
    <property type="term" value="C:plasma membrane"/>
    <property type="evidence" value="ECO:0007669"/>
    <property type="project" value="UniProtKB-SubCell"/>
</dbReference>
<dbReference type="GO" id="GO:0005351">
    <property type="term" value="F:carbohydrate:proton symporter activity"/>
    <property type="evidence" value="ECO:0007669"/>
    <property type="project" value="TreeGrafter"/>
</dbReference>
<dbReference type="CDD" id="cd17359">
    <property type="entry name" value="MFS_XylE_like"/>
    <property type="match status" value="1"/>
</dbReference>
<dbReference type="FunFam" id="1.20.1250.20:FF:000122">
    <property type="entry name" value="D-xylose transporter XylE"/>
    <property type="match status" value="1"/>
</dbReference>
<dbReference type="Gene3D" id="1.20.1250.20">
    <property type="entry name" value="MFS general substrate transporter like domains"/>
    <property type="match status" value="2"/>
</dbReference>
<dbReference type="InterPro" id="IPR020846">
    <property type="entry name" value="MFS_dom"/>
</dbReference>
<dbReference type="InterPro" id="IPR005828">
    <property type="entry name" value="MFS_sugar_transport-like"/>
</dbReference>
<dbReference type="InterPro" id="IPR050360">
    <property type="entry name" value="MFS_Sugar_Transporters"/>
</dbReference>
<dbReference type="InterPro" id="IPR036259">
    <property type="entry name" value="MFS_trans_sf"/>
</dbReference>
<dbReference type="InterPro" id="IPR003663">
    <property type="entry name" value="Sugar/inositol_transpt"/>
</dbReference>
<dbReference type="InterPro" id="IPR005829">
    <property type="entry name" value="Sugar_transporter_CS"/>
</dbReference>
<dbReference type="InterPro" id="IPR047984">
    <property type="entry name" value="XylE-like"/>
</dbReference>
<dbReference type="NCBIfam" id="TIGR00879">
    <property type="entry name" value="SP"/>
    <property type="match status" value="1"/>
</dbReference>
<dbReference type="PANTHER" id="PTHR48022">
    <property type="entry name" value="PLASTIDIC GLUCOSE TRANSPORTER 4"/>
    <property type="match status" value="1"/>
</dbReference>
<dbReference type="PANTHER" id="PTHR48022:SF2">
    <property type="entry name" value="PLASTIDIC GLUCOSE TRANSPORTER 4"/>
    <property type="match status" value="1"/>
</dbReference>
<dbReference type="Pfam" id="PF00083">
    <property type="entry name" value="Sugar_tr"/>
    <property type="match status" value="1"/>
</dbReference>
<dbReference type="PRINTS" id="PR00171">
    <property type="entry name" value="SUGRTRNSPORT"/>
</dbReference>
<dbReference type="SUPFAM" id="SSF103473">
    <property type="entry name" value="MFS general substrate transporter"/>
    <property type="match status" value="1"/>
</dbReference>
<dbReference type="PROSITE" id="PS50850">
    <property type="entry name" value="MFS"/>
    <property type="match status" value="1"/>
</dbReference>
<dbReference type="PROSITE" id="PS00216">
    <property type="entry name" value="SUGAR_TRANSPORT_1"/>
    <property type="match status" value="1"/>
</dbReference>
<dbReference type="PROSITE" id="PS00217">
    <property type="entry name" value="SUGAR_TRANSPORT_2"/>
    <property type="match status" value="1"/>
</dbReference>
<reference key="1">
    <citation type="journal article" date="1990" name="J. Bacteriol.">
        <title>Sequence and genetic organization of a Zymomonas mobilis gene cluster that encodes several enzymes of glucose metabolism.</title>
        <authorList>
            <person name="Barnell W.O."/>
            <person name="Yi K.C."/>
            <person name="Conway T."/>
        </authorList>
    </citation>
    <scope>NUCLEOTIDE SEQUENCE [GENOMIC DNA]</scope>
    <source>
        <strain>ATCC 31821 / ZM4 / CP4</strain>
    </source>
</reference>
<reference key="2">
    <citation type="submission" date="2000-10" db="EMBL/GenBank/DDBJ databases">
        <authorList>
            <person name="Ahn J.Y."/>
            <person name="Kang H.S."/>
        </authorList>
    </citation>
    <scope>NUCLEOTIDE SEQUENCE [GENOMIC DNA]</scope>
    <source>
        <strain>ATCC 31821 / ZM4 / CP4</strain>
    </source>
</reference>
<reference key="3">
    <citation type="journal article" date="2005" name="Nat. Biotechnol.">
        <title>The genome sequence of the ethanologenic bacterium Zymomonas mobilis ZM4.</title>
        <authorList>
            <person name="Seo J.-S."/>
            <person name="Chong H."/>
            <person name="Park H.S."/>
            <person name="Yoon K.-O."/>
            <person name="Jung C."/>
            <person name="Kim J.J."/>
            <person name="Hong J.H."/>
            <person name="Kim H."/>
            <person name="Kim J.-H."/>
            <person name="Kil J.-I."/>
            <person name="Park C.J."/>
            <person name="Oh H.-M."/>
            <person name="Lee J.-S."/>
            <person name="Jin S.-J."/>
            <person name="Um H.-W."/>
            <person name="Lee H.-J."/>
            <person name="Oh S.-J."/>
            <person name="Kim J.Y."/>
            <person name="Kang H.L."/>
            <person name="Lee S.Y."/>
            <person name="Lee K.J."/>
            <person name="Kang H.S."/>
        </authorList>
    </citation>
    <scope>NUCLEOTIDE SEQUENCE [LARGE SCALE GENOMIC DNA]</scope>
    <source>
        <strain>ATCC 31821 / ZM4 / CP4</strain>
    </source>
</reference>
<reference key="4">
    <citation type="journal article" date="1994" name="J. Bacteriol.">
        <title>Reconstruction of glucose uptake and phosphorylation in a glucose-negative mutant of Escherichia coli by using Zymomonas mobilis genes encoding the glucose facilitator protein and glucokinase.</title>
        <authorList>
            <person name="Snoep J.L."/>
            <person name="Arfman N."/>
            <person name="Yomano L.P."/>
            <person name="Fliege R.K."/>
            <person name="Conway T."/>
            <person name="Ingram L.O."/>
        </authorList>
    </citation>
    <scope>FUNCTION</scope>
    <source>
        <strain>ATCC 31821 / ZM4 / CP4</strain>
    </source>
</reference>
<reference key="5">
    <citation type="journal article" date="1995" name="J. Bacteriol.">
        <title>Functional expression of the glucose transporter of Zymomonas mobilis leads to restoration of glucose and fructose uptake in Escherichia coli mutants and provides evidence for its facilitator action.</title>
        <authorList>
            <person name="Weisser P."/>
            <person name="Kraemer R."/>
            <person name="Sahm H."/>
            <person name="Sprenger G.A."/>
        </authorList>
    </citation>
    <scope>FUNCTION</scope>
    <scope>BIOPHYSICOCHEMICAL PROPERTIES</scope>
    <source>
        <strain>ATCC 29191 / DSM 3580 / JCM 10190 / CECT 560 / NBRC 13756 / NCIMB 11199 / NRRL B-4490 / ZM6</strain>
    </source>
</reference>
<feature type="chain" id="PRO_0000050302" description="Glucose facilitated diffusion protein">
    <location>
        <begin position="1"/>
        <end position="473"/>
    </location>
</feature>
<feature type="topological domain" description="Cytoplasmic" evidence="1">
    <location>
        <begin position="1"/>
        <end position="13"/>
    </location>
</feature>
<feature type="transmembrane region" description="Helical; Name=1" evidence="1">
    <location>
        <begin position="14"/>
        <end position="34"/>
    </location>
</feature>
<feature type="topological domain" description="Periplasmic" evidence="1">
    <location>
        <begin position="35"/>
        <end position="59"/>
    </location>
</feature>
<feature type="transmembrane region" description="Helical; Name=2" evidence="1">
    <location>
        <begin position="60"/>
        <end position="80"/>
    </location>
</feature>
<feature type="topological domain" description="Cytoplasmic" evidence="1">
    <location>
        <begin position="81"/>
        <end position="85"/>
    </location>
</feature>
<feature type="transmembrane region" description="Helical; Name=3" evidence="1">
    <location>
        <begin position="86"/>
        <end position="106"/>
    </location>
</feature>
<feature type="topological domain" description="Periplasmic" evidence="1">
    <location>
        <begin position="107"/>
        <end position="112"/>
    </location>
</feature>
<feature type="transmembrane region" description="Helical; Name=4" evidence="1">
    <location>
        <begin position="113"/>
        <end position="133"/>
    </location>
</feature>
<feature type="topological domain" description="Cytoplasmic" evidence="1">
    <location>
        <begin position="134"/>
        <end position="158"/>
    </location>
</feature>
<feature type="transmembrane region" description="Helical; Name=5" evidence="1">
    <location>
        <begin position="159"/>
        <end position="179"/>
    </location>
</feature>
<feature type="topological domain" description="Periplasmic" evidence="1">
    <location>
        <begin position="180"/>
        <end position="187"/>
    </location>
</feature>
<feature type="transmembrane region" description="Helical; Name=6" evidence="1">
    <location>
        <begin position="188"/>
        <end position="208"/>
    </location>
</feature>
<feature type="topological domain" description="Cytoplasmic" evidence="1">
    <location>
        <begin position="209"/>
        <end position="257"/>
    </location>
</feature>
<feature type="transmembrane region" description="Helical; Name=7" evidence="1">
    <location>
        <begin position="258"/>
        <end position="278"/>
    </location>
</feature>
<feature type="topological domain" description="Periplasmic" evidence="1">
    <location>
        <begin position="279"/>
        <end position="303"/>
    </location>
</feature>
<feature type="transmembrane region" description="Helical; Name=8" evidence="1">
    <location>
        <begin position="304"/>
        <end position="324"/>
    </location>
</feature>
<feature type="topological domain" description="Cytoplasmic" evidence="1">
    <location>
        <begin position="325"/>
        <end position="335"/>
    </location>
</feature>
<feature type="transmembrane region" description="Helical; Name=9" evidence="1">
    <location>
        <begin position="336"/>
        <end position="356"/>
    </location>
</feature>
<feature type="topological domain" description="Periplasmic" evidence="1">
    <location>
        <begin position="357"/>
        <end position="366"/>
    </location>
</feature>
<feature type="transmembrane region" description="Helical; Name=10" evidence="1">
    <location>
        <begin position="367"/>
        <end position="387"/>
    </location>
</feature>
<feature type="topological domain" description="Cytoplasmic" evidence="1">
    <location>
        <begin position="388"/>
        <end position="396"/>
    </location>
</feature>
<feature type="transmembrane region" description="Helical; Name=11" evidence="1">
    <location>
        <begin position="397"/>
        <end position="417"/>
    </location>
</feature>
<feature type="topological domain" description="Periplasmic" evidence="1">
    <location>
        <begin position="418"/>
        <end position="429"/>
    </location>
</feature>
<feature type="transmembrane region" description="Helical; Name=12" evidence="1">
    <location>
        <begin position="430"/>
        <end position="450"/>
    </location>
</feature>
<feature type="topological domain" description="Cytoplasmic" evidence="1">
    <location>
        <begin position="451"/>
        <end position="473"/>
    </location>
</feature>
<feature type="sequence conflict" description="In Ref. 1; AAA27691 and 2; AAG29864." evidence="5" ref="1 2">
    <original>A</original>
    <variation>R</variation>
    <location>
        <position position="145"/>
    </location>
</feature>